<evidence type="ECO:0000255" key="1"/>
<evidence type="ECO:0000255" key="2">
    <source>
        <dbReference type="PROSITE-ProRule" id="PRU00604"/>
    </source>
</evidence>
<evidence type="ECO:0000256" key="3">
    <source>
        <dbReference type="SAM" id="MobiDB-lite"/>
    </source>
</evidence>
<evidence type="ECO:0000269" key="4">
    <source>
    </source>
</evidence>
<accession>Q70KG3</accession>
<organism>
    <name type="scientific">Triticum aestivum</name>
    <name type="common">Wheat</name>
    <dbReference type="NCBI Taxonomy" id="4565"/>
    <lineage>
        <taxon>Eukaryota</taxon>
        <taxon>Viridiplantae</taxon>
        <taxon>Streptophyta</taxon>
        <taxon>Embryophyta</taxon>
        <taxon>Tracheophyta</taxon>
        <taxon>Spermatophyta</taxon>
        <taxon>Magnoliopsida</taxon>
        <taxon>Liliopsida</taxon>
        <taxon>Poales</taxon>
        <taxon>Poaceae</taxon>
        <taxon>BOP clade</taxon>
        <taxon>Pooideae</taxon>
        <taxon>Triticodae</taxon>
        <taxon>Triticeae</taxon>
        <taxon>Triticinae</taxon>
        <taxon>Triticum</taxon>
    </lineage>
</organism>
<feature type="signal peptide" evidence="1">
    <location>
        <begin position="1"/>
        <end position="20"/>
    </location>
</feature>
<feature type="chain" id="PRO_0000375846" description="Protein RAFTIN 1B">
    <location>
        <begin position="21"/>
        <end position="362"/>
    </location>
</feature>
<feature type="domain" description="BURP" evidence="2">
    <location>
        <begin position="142"/>
        <end position="356"/>
    </location>
</feature>
<feature type="region of interest" description="Disordered" evidence="3">
    <location>
        <begin position="58"/>
        <end position="94"/>
    </location>
</feature>
<feature type="compositionally biased region" description="Basic and acidic residues" evidence="3">
    <location>
        <begin position="63"/>
        <end position="86"/>
    </location>
</feature>
<feature type="glycosylation site" description="N-linked (GlcNAc...) asparagine" evidence="1">
    <location>
        <position position="102"/>
    </location>
</feature>
<name>RAF1B_WHEAT</name>
<protein>
    <recommendedName>
        <fullName>Protein RAFTIN 1B</fullName>
        <shortName>TaRAFTIN1b</shortName>
    </recommendedName>
    <alternativeName>
        <fullName>BURP domain-containing protein 1B</fullName>
    </alternativeName>
</protein>
<gene>
    <name type="primary">RAFTIN1B</name>
</gene>
<comment type="function">
    <text evidence="4">Required for pollen development. Probably synthesized in the tapetum, packaged in Ubisch bodies and transported at appropriate stages to the micropsores.</text>
</comment>
<comment type="tissue specificity">
    <text evidence="4">Specifically expressed in anthers, in the tapetum and microspores (at protein level).</text>
</comment>
<dbReference type="EMBL" id="AJ575664">
    <property type="protein sequence ID" value="CAE02614.1"/>
    <property type="molecule type" value="mRNA"/>
</dbReference>
<dbReference type="EMBL" id="AJ575665">
    <property type="protein sequence ID" value="CAE02615.1"/>
    <property type="molecule type" value="Genomic_DNA"/>
</dbReference>
<dbReference type="SMR" id="Q70KG3"/>
<dbReference type="STRING" id="4565.Q70KG3"/>
<dbReference type="GlyCosmos" id="Q70KG3">
    <property type="glycosylation" value="1 site, No reported glycans"/>
</dbReference>
<dbReference type="PaxDb" id="4565-Traes_7DS_DFE3DC7B9.1"/>
<dbReference type="EnsemblPlants" id="TraesJUL7B03G04139260.1">
    <property type="protein sequence ID" value="TraesJUL7B03G04139260.1"/>
    <property type="gene ID" value="TraesJUL7B03G04139260"/>
</dbReference>
<dbReference type="EnsemblPlants" id="TraesLAC7B03G04052980.1">
    <property type="protein sequence ID" value="TraesLAC7B03G04052980.1"/>
    <property type="gene ID" value="TraesLAC7B03G04052980"/>
</dbReference>
<dbReference type="EnsemblPlants" id="TraesLDM7B03G04104850.1">
    <property type="protein sequence ID" value="TraesLDM7B03G04104850.1"/>
    <property type="gene ID" value="TraesLDM7B03G04104850"/>
</dbReference>
<dbReference type="EnsemblPlants" id="TraesMAC7B03G04096240.1">
    <property type="protein sequence ID" value="TraesMAC7B03G04096240.1"/>
    <property type="gene ID" value="TraesMAC7B03G04096240"/>
</dbReference>
<dbReference type="EnsemblPlants" id="TraesNOR7B03G04146460.1">
    <property type="protein sequence ID" value="TraesNOR7B03G04146460.1"/>
    <property type="gene ID" value="TraesNOR7B03G04146460"/>
</dbReference>
<dbReference type="EnsemblPlants" id="TraesSTA7B03G04097190.1">
    <property type="protein sequence ID" value="TraesSTA7B03G04097190.1"/>
    <property type="gene ID" value="TraesSTA7B03G04097190"/>
</dbReference>
<dbReference type="EnsemblPlants" id="TraesWEE_scaffold_036461_01G000100.1">
    <property type="protein sequence ID" value="TraesWEE_scaffold_036461_01G000100.1"/>
    <property type="gene ID" value="TraesWEE_scaffold_036461_01G000100"/>
</dbReference>
<dbReference type="Gramene" id="TraesJUL7B03G04139260.1">
    <property type="protein sequence ID" value="TraesJUL7B03G04139260.1"/>
    <property type="gene ID" value="TraesJUL7B03G04139260"/>
</dbReference>
<dbReference type="Gramene" id="TraesLAC7B03G04052980.1">
    <property type="protein sequence ID" value="TraesLAC7B03G04052980.1"/>
    <property type="gene ID" value="TraesLAC7B03G04052980"/>
</dbReference>
<dbReference type="Gramene" id="TraesLDM7B03G04104850.1">
    <property type="protein sequence ID" value="TraesLDM7B03G04104850.1"/>
    <property type="gene ID" value="TraesLDM7B03G04104850"/>
</dbReference>
<dbReference type="Gramene" id="TraesMAC7B03G04096240.1">
    <property type="protein sequence ID" value="TraesMAC7B03G04096240.1"/>
    <property type="gene ID" value="TraesMAC7B03G04096240"/>
</dbReference>
<dbReference type="Gramene" id="TraesNOR7B03G04146460.1">
    <property type="protein sequence ID" value="TraesNOR7B03G04146460.1"/>
    <property type="gene ID" value="TraesNOR7B03G04146460"/>
</dbReference>
<dbReference type="Gramene" id="TraesSTA7B03G04097190.1">
    <property type="protein sequence ID" value="TraesSTA7B03G04097190.1"/>
    <property type="gene ID" value="TraesSTA7B03G04097190"/>
</dbReference>
<dbReference type="Gramene" id="TraesWEE_scaffold_036461_01G000100.1">
    <property type="protein sequence ID" value="TraesWEE_scaffold_036461_01G000100.1"/>
    <property type="gene ID" value="TraesWEE_scaffold_036461_01G000100"/>
</dbReference>
<dbReference type="Proteomes" id="UP000019116">
    <property type="component" value="Unplaced"/>
</dbReference>
<dbReference type="ExpressionAtlas" id="Q70KG3">
    <property type="expression patterns" value="baseline"/>
</dbReference>
<dbReference type="GO" id="GO:0043668">
    <property type="term" value="C:exine"/>
    <property type="evidence" value="ECO:0000314"/>
    <property type="project" value="UniProtKB"/>
</dbReference>
<dbReference type="GO" id="GO:0070645">
    <property type="term" value="C:Ubisch body"/>
    <property type="evidence" value="ECO:0000314"/>
    <property type="project" value="UniProtKB"/>
</dbReference>
<dbReference type="GO" id="GO:0009555">
    <property type="term" value="P:pollen development"/>
    <property type="evidence" value="ECO:0000318"/>
    <property type="project" value="GO_Central"/>
</dbReference>
<dbReference type="GO" id="GO:0010152">
    <property type="term" value="P:pollen maturation"/>
    <property type="evidence" value="ECO:0000250"/>
    <property type="project" value="UniProtKB"/>
</dbReference>
<dbReference type="InterPro" id="IPR044816">
    <property type="entry name" value="BURP"/>
</dbReference>
<dbReference type="InterPro" id="IPR004873">
    <property type="entry name" value="BURP_dom"/>
</dbReference>
<dbReference type="PANTHER" id="PTHR31236">
    <property type="entry name" value="BURP DOMAIN PROTEIN USPL1-LIKE"/>
    <property type="match status" value="1"/>
</dbReference>
<dbReference type="PANTHER" id="PTHR31236:SF10">
    <property type="entry name" value="BURP DOMAIN-CONTAINING PROTEIN 13"/>
    <property type="match status" value="1"/>
</dbReference>
<dbReference type="Pfam" id="PF03181">
    <property type="entry name" value="BURP"/>
    <property type="match status" value="1"/>
</dbReference>
<dbReference type="SMART" id="SM01045">
    <property type="entry name" value="BURP"/>
    <property type="match status" value="1"/>
</dbReference>
<dbReference type="PROSITE" id="PS51277">
    <property type="entry name" value="BURP"/>
    <property type="match status" value="1"/>
</dbReference>
<keyword id="KW-0325">Glycoprotein</keyword>
<keyword id="KW-1185">Reference proteome</keyword>
<keyword id="KW-0732">Signal</keyword>
<proteinExistence type="evidence at protein level"/>
<reference key="1">
    <citation type="journal article" date="2003" name="Proc. Natl. Acad. Sci. U.S.A.">
        <title>The classical Ubisch bodies carry a sporophytically produced structural protein (RAFTIN) that is essential for pollen development.</title>
        <authorList>
            <person name="Wang A."/>
            <person name="Xia Q."/>
            <person name="Xie W."/>
            <person name="Datla R."/>
            <person name="Selvaraj G."/>
        </authorList>
    </citation>
    <scope>NUCLEOTIDE SEQUENCE [GENOMIC DNA / MRNA]</scope>
    <scope>FUNCTION</scope>
    <scope>TISSUE SPECIFICITY</scope>
    <source>
        <strain>cv. AC Karma</strain>
        <tissue>Anther</tissue>
    </source>
</reference>
<sequence length="362" mass="38313">MARFLVALLAATLVAVQAGGQLGHAAPATGEVFWRAVLPHSPLPDAVLRLLKQPAAESTSFVRDPEDRPPFDYRDYSRSSSDDEPSKSTVAASGAGGFDYDNYSGADERRGATDEYKAPSSSLAGSGAYMARGGKAETTTVFFHEEAVRVGRRLPFHFPPATPAALGFLPRQVADSVPFTTAALPGILATFGIASDSTTVPSMEATLRACESPTIAGESKFCATSLEALVERAMGVLGTRDIRPVTSTLPRAGAPLQTYTVVAVQPVEGGPVFVACHDEAYPYTVYRCHTTGPSRAYTVDMEGARGADAVTIAAVCHTDTSLWNPEHVSFKLLGTKPGGTPVCHLMPYGHIIWAKNVKRSPA</sequence>